<protein>
    <recommendedName>
        <fullName evidence="1">tRNA pseudouridine synthase A</fullName>
        <ecNumber evidence="1">5.4.99.12</ecNumber>
    </recommendedName>
    <alternativeName>
        <fullName evidence="1">tRNA pseudouridine(38-40) synthase</fullName>
    </alternativeName>
    <alternativeName>
        <fullName evidence="1">tRNA pseudouridylate synthase I</fullName>
    </alternativeName>
    <alternativeName>
        <fullName evidence="1">tRNA-uridine isomerase I</fullName>
    </alternativeName>
</protein>
<organism>
    <name type="scientific">Coxiella burnetii (strain CbuG_Q212)</name>
    <name type="common">Coxiella burnetii (strain Q212)</name>
    <dbReference type="NCBI Taxonomy" id="434923"/>
    <lineage>
        <taxon>Bacteria</taxon>
        <taxon>Pseudomonadati</taxon>
        <taxon>Pseudomonadota</taxon>
        <taxon>Gammaproteobacteria</taxon>
        <taxon>Legionellales</taxon>
        <taxon>Coxiellaceae</taxon>
        <taxon>Coxiella</taxon>
    </lineage>
</organism>
<reference key="1">
    <citation type="journal article" date="2009" name="Infect. Immun.">
        <title>Comparative genomics reveal extensive transposon-mediated genomic plasticity and diversity among potential effector proteins within the genus Coxiella.</title>
        <authorList>
            <person name="Beare P.A."/>
            <person name="Unsworth N."/>
            <person name="Andoh M."/>
            <person name="Voth D.E."/>
            <person name="Omsland A."/>
            <person name="Gilk S.D."/>
            <person name="Williams K.P."/>
            <person name="Sobral B.W."/>
            <person name="Kupko J.J. III"/>
            <person name="Porcella S.F."/>
            <person name="Samuel J.E."/>
            <person name="Heinzen R.A."/>
        </authorList>
    </citation>
    <scope>NUCLEOTIDE SEQUENCE [LARGE SCALE GENOMIC DNA]</scope>
    <source>
        <strain>CbuG_Q212</strain>
    </source>
</reference>
<name>TRUA_COXB2</name>
<sequence>MARIALGIRYDGSAYHGWQVQEALKTVQGEVEKALSAVANHPVFVTCAGRTDAGVHASAQVAHFDTTAYRSDHAWVFGANSNLPHDISILWAKAVEEDFHARYSAMARRYRYIVYNHEIRPAILRKAIGWHYRPLDEKRMQAGAQYLIGEHDFSSFQGAGCQSRTPVRKIFQIEIYRIRRMVVIEVQANAFLLHMVRNIAGVLIAIGSGEKHPDWAQTVLKAKDRRQGGVTVPPNGLYLVEVNYPPNFKLPRMPLGPFFLP</sequence>
<dbReference type="EC" id="5.4.99.12" evidence="1"/>
<dbReference type="EMBL" id="CP001019">
    <property type="protein sequence ID" value="ACJ18448.1"/>
    <property type="molecule type" value="Genomic_DNA"/>
</dbReference>
<dbReference type="RefSeq" id="WP_005768766.1">
    <property type="nucleotide sequence ID" value="NC_011527.1"/>
</dbReference>
<dbReference type="SMR" id="B6J0H0"/>
<dbReference type="KEGG" id="cbg:CbuG_1110"/>
<dbReference type="HOGENOM" id="CLU_014673_0_2_6"/>
<dbReference type="GO" id="GO:0003723">
    <property type="term" value="F:RNA binding"/>
    <property type="evidence" value="ECO:0007669"/>
    <property type="project" value="InterPro"/>
</dbReference>
<dbReference type="GO" id="GO:0160147">
    <property type="term" value="F:tRNA pseudouridine(38-40) synthase activity"/>
    <property type="evidence" value="ECO:0007669"/>
    <property type="project" value="UniProtKB-EC"/>
</dbReference>
<dbReference type="GO" id="GO:0031119">
    <property type="term" value="P:tRNA pseudouridine synthesis"/>
    <property type="evidence" value="ECO:0007669"/>
    <property type="project" value="UniProtKB-UniRule"/>
</dbReference>
<dbReference type="CDD" id="cd02570">
    <property type="entry name" value="PseudoU_synth_EcTruA"/>
    <property type="match status" value="1"/>
</dbReference>
<dbReference type="FunFam" id="3.30.70.580:FF:000001">
    <property type="entry name" value="tRNA pseudouridine synthase A"/>
    <property type="match status" value="1"/>
</dbReference>
<dbReference type="Gene3D" id="3.30.70.660">
    <property type="entry name" value="Pseudouridine synthase I, catalytic domain, C-terminal subdomain"/>
    <property type="match status" value="1"/>
</dbReference>
<dbReference type="Gene3D" id="3.30.70.580">
    <property type="entry name" value="Pseudouridine synthase I, catalytic domain, N-terminal subdomain"/>
    <property type="match status" value="1"/>
</dbReference>
<dbReference type="HAMAP" id="MF_00171">
    <property type="entry name" value="TruA"/>
    <property type="match status" value="1"/>
</dbReference>
<dbReference type="InterPro" id="IPR020103">
    <property type="entry name" value="PsdUridine_synth_cat_dom_sf"/>
</dbReference>
<dbReference type="InterPro" id="IPR001406">
    <property type="entry name" value="PsdUridine_synth_TruA"/>
</dbReference>
<dbReference type="InterPro" id="IPR020097">
    <property type="entry name" value="PsdUridine_synth_TruA_a/b_dom"/>
</dbReference>
<dbReference type="InterPro" id="IPR020095">
    <property type="entry name" value="PsdUridine_synth_TruA_C"/>
</dbReference>
<dbReference type="InterPro" id="IPR020094">
    <property type="entry name" value="TruA/RsuA/RluB/E/F_N"/>
</dbReference>
<dbReference type="NCBIfam" id="TIGR00071">
    <property type="entry name" value="hisT_truA"/>
    <property type="match status" value="1"/>
</dbReference>
<dbReference type="PANTHER" id="PTHR11142">
    <property type="entry name" value="PSEUDOURIDYLATE SYNTHASE"/>
    <property type="match status" value="1"/>
</dbReference>
<dbReference type="PANTHER" id="PTHR11142:SF0">
    <property type="entry name" value="TRNA PSEUDOURIDINE SYNTHASE-LIKE 1"/>
    <property type="match status" value="1"/>
</dbReference>
<dbReference type="Pfam" id="PF01416">
    <property type="entry name" value="PseudoU_synth_1"/>
    <property type="match status" value="2"/>
</dbReference>
<dbReference type="PIRSF" id="PIRSF001430">
    <property type="entry name" value="tRNA_psdUrid_synth"/>
    <property type="match status" value="1"/>
</dbReference>
<dbReference type="SUPFAM" id="SSF55120">
    <property type="entry name" value="Pseudouridine synthase"/>
    <property type="match status" value="1"/>
</dbReference>
<keyword id="KW-0413">Isomerase</keyword>
<keyword id="KW-0819">tRNA processing</keyword>
<evidence type="ECO:0000255" key="1">
    <source>
        <dbReference type="HAMAP-Rule" id="MF_00171"/>
    </source>
</evidence>
<proteinExistence type="inferred from homology"/>
<feature type="chain" id="PRO_1000194541" description="tRNA pseudouridine synthase A">
    <location>
        <begin position="1"/>
        <end position="261"/>
    </location>
</feature>
<feature type="active site" description="Nucleophile" evidence="1">
    <location>
        <position position="52"/>
    </location>
</feature>
<feature type="binding site" evidence="1">
    <location>
        <position position="110"/>
    </location>
    <ligand>
        <name>substrate</name>
    </ligand>
</feature>
<gene>
    <name evidence="1" type="primary">truA</name>
    <name type="ordered locus">CbuG_1110</name>
</gene>
<accession>B6J0H0</accession>
<comment type="function">
    <text evidence="1">Formation of pseudouridine at positions 38, 39 and 40 in the anticodon stem and loop of transfer RNAs.</text>
</comment>
<comment type="catalytic activity">
    <reaction evidence="1">
        <text>uridine(38/39/40) in tRNA = pseudouridine(38/39/40) in tRNA</text>
        <dbReference type="Rhea" id="RHEA:22376"/>
        <dbReference type="Rhea" id="RHEA-COMP:10085"/>
        <dbReference type="Rhea" id="RHEA-COMP:10087"/>
        <dbReference type="ChEBI" id="CHEBI:65314"/>
        <dbReference type="ChEBI" id="CHEBI:65315"/>
        <dbReference type="EC" id="5.4.99.12"/>
    </reaction>
</comment>
<comment type="subunit">
    <text evidence="1">Homodimer.</text>
</comment>
<comment type="similarity">
    <text evidence="1">Belongs to the tRNA pseudouridine synthase TruA family.</text>
</comment>